<dbReference type="EMBL" id="AE014184">
    <property type="protein sequence ID" value="AAO44465.1"/>
    <property type="molecule type" value="Genomic_DNA"/>
</dbReference>
<dbReference type="RefSeq" id="WP_011096352.1">
    <property type="nucleotide sequence ID" value="NC_004572.3"/>
</dbReference>
<dbReference type="SMR" id="Q83MW6"/>
<dbReference type="STRING" id="203267.TWT_368"/>
<dbReference type="GeneID" id="67388180"/>
<dbReference type="KEGG" id="twh:TWT_368"/>
<dbReference type="eggNOG" id="COG0231">
    <property type="taxonomic scope" value="Bacteria"/>
</dbReference>
<dbReference type="HOGENOM" id="CLU_074944_0_1_11"/>
<dbReference type="OrthoDB" id="9801844at2"/>
<dbReference type="UniPathway" id="UPA00345"/>
<dbReference type="Proteomes" id="UP000002200">
    <property type="component" value="Chromosome"/>
</dbReference>
<dbReference type="GO" id="GO:0005737">
    <property type="term" value="C:cytoplasm"/>
    <property type="evidence" value="ECO:0007669"/>
    <property type="project" value="UniProtKB-SubCell"/>
</dbReference>
<dbReference type="GO" id="GO:0003746">
    <property type="term" value="F:translation elongation factor activity"/>
    <property type="evidence" value="ECO:0007669"/>
    <property type="project" value="UniProtKB-UniRule"/>
</dbReference>
<dbReference type="GO" id="GO:0043043">
    <property type="term" value="P:peptide biosynthetic process"/>
    <property type="evidence" value="ECO:0007669"/>
    <property type="project" value="InterPro"/>
</dbReference>
<dbReference type="CDD" id="cd04470">
    <property type="entry name" value="S1_EF-P_repeat_1"/>
    <property type="match status" value="1"/>
</dbReference>
<dbReference type="CDD" id="cd05794">
    <property type="entry name" value="S1_EF-P_repeat_2"/>
    <property type="match status" value="1"/>
</dbReference>
<dbReference type="FunFam" id="2.30.30.30:FF:000003">
    <property type="entry name" value="Elongation factor P"/>
    <property type="match status" value="1"/>
</dbReference>
<dbReference type="FunFam" id="2.40.50.140:FF:000004">
    <property type="entry name" value="Elongation factor P"/>
    <property type="match status" value="1"/>
</dbReference>
<dbReference type="FunFam" id="2.40.50.140:FF:000009">
    <property type="entry name" value="Elongation factor P"/>
    <property type="match status" value="1"/>
</dbReference>
<dbReference type="Gene3D" id="2.30.30.30">
    <property type="match status" value="1"/>
</dbReference>
<dbReference type="Gene3D" id="2.40.50.140">
    <property type="entry name" value="Nucleic acid-binding proteins"/>
    <property type="match status" value="2"/>
</dbReference>
<dbReference type="HAMAP" id="MF_00141">
    <property type="entry name" value="EF_P"/>
    <property type="match status" value="1"/>
</dbReference>
<dbReference type="InterPro" id="IPR015365">
    <property type="entry name" value="Elong-fact-P_C"/>
</dbReference>
<dbReference type="InterPro" id="IPR012340">
    <property type="entry name" value="NA-bd_OB-fold"/>
</dbReference>
<dbReference type="InterPro" id="IPR014722">
    <property type="entry name" value="Rib_uL2_dom2"/>
</dbReference>
<dbReference type="InterPro" id="IPR020599">
    <property type="entry name" value="Transl_elong_fac_P/YeiP"/>
</dbReference>
<dbReference type="InterPro" id="IPR013185">
    <property type="entry name" value="Transl_elong_KOW-like"/>
</dbReference>
<dbReference type="InterPro" id="IPR001059">
    <property type="entry name" value="Transl_elong_P/YeiP_cen"/>
</dbReference>
<dbReference type="InterPro" id="IPR013852">
    <property type="entry name" value="Transl_elong_P/YeiP_CS"/>
</dbReference>
<dbReference type="InterPro" id="IPR011768">
    <property type="entry name" value="Transl_elongation_fac_P"/>
</dbReference>
<dbReference type="InterPro" id="IPR008991">
    <property type="entry name" value="Translation_prot_SH3-like_sf"/>
</dbReference>
<dbReference type="NCBIfam" id="TIGR00038">
    <property type="entry name" value="efp"/>
    <property type="match status" value="1"/>
</dbReference>
<dbReference type="NCBIfam" id="NF001810">
    <property type="entry name" value="PRK00529.1"/>
    <property type="match status" value="1"/>
</dbReference>
<dbReference type="PANTHER" id="PTHR30053">
    <property type="entry name" value="ELONGATION FACTOR P"/>
    <property type="match status" value="1"/>
</dbReference>
<dbReference type="PANTHER" id="PTHR30053:SF12">
    <property type="entry name" value="ELONGATION FACTOR P (EF-P) FAMILY PROTEIN"/>
    <property type="match status" value="1"/>
</dbReference>
<dbReference type="Pfam" id="PF01132">
    <property type="entry name" value="EFP"/>
    <property type="match status" value="1"/>
</dbReference>
<dbReference type="Pfam" id="PF08207">
    <property type="entry name" value="EFP_N"/>
    <property type="match status" value="1"/>
</dbReference>
<dbReference type="Pfam" id="PF09285">
    <property type="entry name" value="Elong-fact-P_C"/>
    <property type="match status" value="1"/>
</dbReference>
<dbReference type="PIRSF" id="PIRSF005901">
    <property type="entry name" value="EF-P"/>
    <property type="match status" value="1"/>
</dbReference>
<dbReference type="SMART" id="SM01185">
    <property type="entry name" value="EFP"/>
    <property type="match status" value="1"/>
</dbReference>
<dbReference type="SMART" id="SM00841">
    <property type="entry name" value="Elong-fact-P_C"/>
    <property type="match status" value="1"/>
</dbReference>
<dbReference type="SUPFAM" id="SSF50249">
    <property type="entry name" value="Nucleic acid-binding proteins"/>
    <property type="match status" value="2"/>
</dbReference>
<dbReference type="SUPFAM" id="SSF50104">
    <property type="entry name" value="Translation proteins SH3-like domain"/>
    <property type="match status" value="1"/>
</dbReference>
<dbReference type="PROSITE" id="PS01275">
    <property type="entry name" value="EFP"/>
    <property type="match status" value="1"/>
</dbReference>
<proteinExistence type="inferred from homology"/>
<protein>
    <recommendedName>
        <fullName evidence="1">Elongation factor P</fullName>
        <shortName evidence="1">EF-P</shortName>
    </recommendedName>
</protein>
<accession>Q83MW6</accession>
<gene>
    <name evidence="1" type="primary">efp</name>
    <name type="ordered locus">TWT_368</name>
</gene>
<sequence>MASTSDIRNGVVLNINGQLNTVIEFQHVKPGKGGAFVRTKLKNILTGKVVDKTFNAGASVVLENVDRRDCTYLYRDADSFVFMDLADYDQIRLTASQVASAANYLSDNQKVVIATHNNAPLYVDLPPSVVLAVTHTEPGVQADRSTGGTKPATLETGYQIQVPLFITVGTRIRVDTRTGAYIGKA</sequence>
<name>EFP_TROWT</name>
<comment type="function">
    <text evidence="1">Involved in peptide bond synthesis. Stimulates efficient translation and peptide-bond synthesis on native or reconstituted 70S ribosomes in vitro. Probably functions indirectly by altering the affinity of the ribosome for aminoacyl-tRNA, thus increasing their reactivity as acceptors for peptidyl transferase.</text>
</comment>
<comment type="pathway">
    <text evidence="1">Protein biosynthesis; polypeptide chain elongation.</text>
</comment>
<comment type="subcellular location">
    <subcellularLocation>
        <location evidence="1">Cytoplasm</location>
    </subcellularLocation>
</comment>
<comment type="similarity">
    <text evidence="1">Belongs to the elongation factor P family.</text>
</comment>
<keyword id="KW-0963">Cytoplasm</keyword>
<keyword id="KW-0251">Elongation factor</keyword>
<keyword id="KW-0648">Protein biosynthesis</keyword>
<keyword id="KW-1185">Reference proteome</keyword>
<feature type="chain" id="PRO_0000094362" description="Elongation factor P">
    <location>
        <begin position="1"/>
        <end position="185"/>
    </location>
</feature>
<reference key="1">
    <citation type="journal article" date="2003" name="Genome Res.">
        <title>Tropheryma whipplei twist: a human pathogenic Actinobacteria with a reduced genome.</title>
        <authorList>
            <person name="Raoult D."/>
            <person name="Ogata H."/>
            <person name="Audic S."/>
            <person name="Robert C."/>
            <person name="Suhre K."/>
            <person name="Drancourt M."/>
            <person name="Claverie J.-M."/>
        </authorList>
    </citation>
    <scope>NUCLEOTIDE SEQUENCE [LARGE SCALE GENOMIC DNA]</scope>
    <source>
        <strain>Twist</strain>
    </source>
</reference>
<organism>
    <name type="scientific">Tropheryma whipplei (strain Twist)</name>
    <name type="common">Whipple's bacillus</name>
    <dbReference type="NCBI Taxonomy" id="203267"/>
    <lineage>
        <taxon>Bacteria</taxon>
        <taxon>Bacillati</taxon>
        <taxon>Actinomycetota</taxon>
        <taxon>Actinomycetes</taxon>
        <taxon>Micrococcales</taxon>
        <taxon>Tropherymataceae</taxon>
        <taxon>Tropheryma</taxon>
    </lineage>
</organism>
<evidence type="ECO:0000255" key="1">
    <source>
        <dbReference type="HAMAP-Rule" id="MF_00141"/>
    </source>
</evidence>